<dbReference type="EC" id="2.3.1.47"/>
<dbReference type="EMBL" id="L42023">
    <property type="protein sequence ID" value="AAC23202.1"/>
    <property type="molecule type" value="Genomic_DNA"/>
</dbReference>
<dbReference type="PIR" id="D64129">
    <property type="entry name" value="D64129"/>
</dbReference>
<dbReference type="RefSeq" id="NP_439702.1">
    <property type="nucleotide sequence ID" value="NC_000907.1"/>
</dbReference>
<dbReference type="SMR" id="P44422"/>
<dbReference type="STRING" id="71421.HI_1553"/>
<dbReference type="EnsemblBacteria" id="AAC23202">
    <property type="protein sequence ID" value="AAC23202"/>
    <property type="gene ID" value="HI_1553"/>
</dbReference>
<dbReference type="KEGG" id="hin:HI_1553"/>
<dbReference type="PATRIC" id="fig|71421.8.peg.1624"/>
<dbReference type="eggNOG" id="COG0156">
    <property type="taxonomic scope" value="Bacteria"/>
</dbReference>
<dbReference type="HOGENOM" id="CLU_015846_11_2_6"/>
<dbReference type="OrthoDB" id="9807157at2"/>
<dbReference type="PhylomeDB" id="P44422"/>
<dbReference type="BioCyc" id="HINF71421:G1GJ1-1573-MONOMER"/>
<dbReference type="UniPathway" id="UPA00078"/>
<dbReference type="Proteomes" id="UP000000579">
    <property type="component" value="Chromosome"/>
</dbReference>
<dbReference type="GO" id="GO:0008710">
    <property type="term" value="F:8-amino-7-oxononanoate synthase activity"/>
    <property type="evidence" value="ECO:0000318"/>
    <property type="project" value="GO_Central"/>
</dbReference>
<dbReference type="GO" id="GO:0030170">
    <property type="term" value="F:pyridoxal phosphate binding"/>
    <property type="evidence" value="ECO:0007669"/>
    <property type="project" value="InterPro"/>
</dbReference>
<dbReference type="GO" id="GO:0009102">
    <property type="term" value="P:biotin biosynthetic process"/>
    <property type="evidence" value="ECO:0000318"/>
    <property type="project" value="GO_Central"/>
</dbReference>
<dbReference type="CDD" id="cd06454">
    <property type="entry name" value="KBL_like"/>
    <property type="match status" value="1"/>
</dbReference>
<dbReference type="Gene3D" id="3.90.1150.10">
    <property type="entry name" value="Aspartate Aminotransferase, domain 1"/>
    <property type="match status" value="1"/>
</dbReference>
<dbReference type="Gene3D" id="3.40.640.10">
    <property type="entry name" value="Type I PLP-dependent aspartate aminotransferase-like (Major domain)"/>
    <property type="match status" value="1"/>
</dbReference>
<dbReference type="InterPro" id="IPR001917">
    <property type="entry name" value="Aminotrans_II_pyridoxalP_BS"/>
</dbReference>
<dbReference type="InterPro" id="IPR004839">
    <property type="entry name" value="Aminotransferase_I/II_large"/>
</dbReference>
<dbReference type="InterPro" id="IPR050087">
    <property type="entry name" value="AON_synthase_class-II"/>
</dbReference>
<dbReference type="InterPro" id="IPR004723">
    <property type="entry name" value="AONS_Archaea/Proteobacteria"/>
</dbReference>
<dbReference type="InterPro" id="IPR015424">
    <property type="entry name" value="PyrdxlP-dep_Trfase"/>
</dbReference>
<dbReference type="InterPro" id="IPR015421">
    <property type="entry name" value="PyrdxlP-dep_Trfase_major"/>
</dbReference>
<dbReference type="InterPro" id="IPR015422">
    <property type="entry name" value="PyrdxlP-dep_Trfase_small"/>
</dbReference>
<dbReference type="NCBIfam" id="TIGR00858">
    <property type="entry name" value="bioF"/>
    <property type="match status" value="1"/>
</dbReference>
<dbReference type="PANTHER" id="PTHR13693:SF100">
    <property type="entry name" value="8-AMINO-7-OXONONANOATE SYNTHASE"/>
    <property type="match status" value="1"/>
</dbReference>
<dbReference type="PANTHER" id="PTHR13693">
    <property type="entry name" value="CLASS II AMINOTRANSFERASE/8-AMINO-7-OXONONANOATE SYNTHASE"/>
    <property type="match status" value="1"/>
</dbReference>
<dbReference type="Pfam" id="PF00155">
    <property type="entry name" value="Aminotran_1_2"/>
    <property type="match status" value="1"/>
</dbReference>
<dbReference type="SUPFAM" id="SSF53383">
    <property type="entry name" value="PLP-dependent transferases"/>
    <property type="match status" value="1"/>
</dbReference>
<dbReference type="PROSITE" id="PS00599">
    <property type="entry name" value="AA_TRANSFER_CLASS_2"/>
    <property type="match status" value="1"/>
</dbReference>
<evidence type="ECO:0000250" key="1"/>
<evidence type="ECO:0000305" key="2"/>
<feature type="chain" id="PRO_0000163813" description="Putative 8-amino-7-oxononanoate synthase">
    <location>
        <begin position="1"/>
        <end position="380"/>
    </location>
</feature>
<feature type="binding site" evidence="1">
    <location>
        <position position="18"/>
    </location>
    <ligand>
        <name>substrate</name>
    </ligand>
</feature>
<feature type="binding site" evidence="1">
    <location>
        <begin position="106"/>
        <end position="107"/>
    </location>
    <ligand>
        <name>pyridoxal 5'-phosphate</name>
        <dbReference type="ChEBI" id="CHEBI:597326"/>
    </ligand>
</feature>
<feature type="binding site" evidence="1">
    <location>
        <position position="131"/>
    </location>
    <ligand>
        <name>substrate</name>
    </ligand>
</feature>
<feature type="binding site" evidence="1">
    <location>
        <position position="179"/>
    </location>
    <ligand>
        <name>pyridoxal 5'-phosphate</name>
        <dbReference type="ChEBI" id="CHEBI:597326"/>
    </ligand>
</feature>
<feature type="binding site" evidence="1">
    <location>
        <begin position="205"/>
        <end position="208"/>
    </location>
    <ligand>
        <name>pyridoxal 5'-phosphate</name>
        <dbReference type="ChEBI" id="CHEBI:597326"/>
    </ligand>
</feature>
<feature type="binding site" evidence="1">
    <location>
        <begin position="236"/>
        <end position="239"/>
    </location>
    <ligand>
        <name>pyridoxal 5'-phosphate</name>
        <dbReference type="ChEBI" id="CHEBI:597326"/>
    </ligand>
</feature>
<feature type="binding site" evidence="1">
    <location>
        <position position="352"/>
    </location>
    <ligand>
        <name>substrate</name>
    </ligand>
</feature>
<feature type="modified residue" description="N6-(pyridoxal phosphate)lysine" evidence="2">
    <location>
        <position position="239"/>
    </location>
</feature>
<protein>
    <recommendedName>
        <fullName>Putative 8-amino-7-oxononanoate synthase</fullName>
        <shortName>AONS</shortName>
        <ecNumber>2.3.1.47</ecNumber>
    </recommendedName>
    <alternativeName>
        <fullName>7-keto-8-amino-pelargonic acid synthase</fullName>
        <shortName>7-KAP synthase</shortName>
    </alternativeName>
    <alternativeName>
        <fullName>8-amino-7-ketopelargonate synthase</fullName>
    </alternativeName>
</protein>
<gene>
    <name type="primary">bioF</name>
    <name type="ordered locus">HI_1553</name>
</gene>
<proteinExistence type="inferred from homology"/>
<accession>P44422</accession>
<comment type="function">
    <text evidence="1">Catalyzes the decarboxylative condensation of pimeloyl-[acyl-carrier protein] and L-alanine to produce 8-amino-7-oxononanoate (AON), [acyl-carrier protein], and carbon dioxide.</text>
</comment>
<comment type="catalytic activity">
    <reaction>
        <text>6-carboxyhexanoyl-[ACP] + L-alanine + H(+) = (8S)-8-amino-7-oxononanoate + holo-[ACP] + CO2</text>
        <dbReference type="Rhea" id="RHEA:42288"/>
        <dbReference type="Rhea" id="RHEA-COMP:9685"/>
        <dbReference type="Rhea" id="RHEA-COMP:9955"/>
        <dbReference type="ChEBI" id="CHEBI:15378"/>
        <dbReference type="ChEBI" id="CHEBI:16526"/>
        <dbReference type="ChEBI" id="CHEBI:57972"/>
        <dbReference type="ChEBI" id="CHEBI:64479"/>
        <dbReference type="ChEBI" id="CHEBI:78846"/>
        <dbReference type="ChEBI" id="CHEBI:149468"/>
        <dbReference type="EC" id="2.3.1.47"/>
    </reaction>
</comment>
<comment type="cofactor">
    <cofactor evidence="1">
        <name>pyridoxal 5'-phosphate</name>
        <dbReference type="ChEBI" id="CHEBI:597326"/>
    </cofactor>
</comment>
<comment type="pathway">
    <text>Cofactor biosynthesis; biotin biosynthesis.</text>
</comment>
<comment type="subunit">
    <text evidence="1">Homodimer.</text>
</comment>
<comment type="similarity">
    <text evidence="2">Belongs to the class-II pyridoxal-phosphate-dependent aminotransferase family. BioF subfamily.</text>
</comment>
<organism>
    <name type="scientific">Haemophilus influenzae (strain ATCC 51907 / DSM 11121 / KW20 / Rd)</name>
    <dbReference type="NCBI Taxonomy" id="71421"/>
    <lineage>
        <taxon>Bacteria</taxon>
        <taxon>Pseudomonadati</taxon>
        <taxon>Pseudomonadota</taxon>
        <taxon>Gammaproteobacteria</taxon>
        <taxon>Pasteurellales</taxon>
        <taxon>Pasteurellaceae</taxon>
        <taxon>Haemophilus</taxon>
    </lineage>
</organism>
<keyword id="KW-0093">Biotin biosynthesis</keyword>
<keyword id="KW-0663">Pyridoxal phosphate</keyword>
<keyword id="KW-1185">Reference proteome</keyword>
<keyword id="KW-0808">Transferase</keyword>
<name>BIOF_HAEIN</name>
<sequence length="380" mass="43212">MDAFKQQLEQLSAKNQYRSIPDLVHQGRYITRENRKMLNMSSNDYLGLASNENLRQSFLQQYGGNFPSFTSSSSRLLTGNFPIYTDLEELVAQRFQRESALLFNSGYHANIGILPALTTTKSLILADKLVHASMIDGIRLSQCEFFRYRHNDYEHLKNLLEKNVGKFDRTFIVTESVFSMDGDVADLKQLVQLKKQFPNTYLYVDEAHAVGVYGQNGLGIAERANVIADIDLLVGTFGKALASMGAYVVCDQILKECLINQMRPLIFSTALPPFNVAWTHFIFERLPQLSKERTHLEQLSAFLRQEVEHRTQIMPSQTCIVPYILGENEATLAKAKDLQEQGYYCLPIRPPTVPKNTSRIRLSLTADMTADEVRQFAVHL</sequence>
<reference key="1">
    <citation type="journal article" date="1995" name="Science">
        <title>Whole-genome random sequencing and assembly of Haemophilus influenzae Rd.</title>
        <authorList>
            <person name="Fleischmann R.D."/>
            <person name="Adams M.D."/>
            <person name="White O."/>
            <person name="Clayton R.A."/>
            <person name="Kirkness E.F."/>
            <person name="Kerlavage A.R."/>
            <person name="Bult C.J."/>
            <person name="Tomb J.-F."/>
            <person name="Dougherty B.A."/>
            <person name="Merrick J.M."/>
            <person name="McKenney K."/>
            <person name="Sutton G.G."/>
            <person name="FitzHugh W."/>
            <person name="Fields C.A."/>
            <person name="Gocayne J.D."/>
            <person name="Scott J.D."/>
            <person name="Shirley R."/>
            <person name="Liu L.-I."/>
            <person name="Glodek A."/>
            <person name="Kelley J.M."/>
            <person name="Weidman J.F."/>
            <person name="Phillips C.A."/>
            <person name="Spriggs T."/>
            <person name="Hedblom E."/>
            <person name="Cotton M.D."/>
            <person name="Utterback T.R."/>
            <person name="Hanna M.C."/>
            <person name="Nguyen D.T."/>
            <person name="Saudek D.M."/>
            <person name="Brandon R.C."/>
            <person name="Fine L.D."/>
            <person name="Fritchman J.L."/>
            <person name="Fuhrmann J.L."/>
            <person name="Geoghagen N.S.M."/>
            <person name="Gnehm C.L."/>
            <person name="McDonald L.A."/>
            <person name="Small K.V."/>
            <person name="Fraser C.M."/>
            <person name="Smith H.O."/>
            <person name="Venter J.C."/>
        </authorList>
    </citation>
    <scope>NUCLEOTIDE SEQUENCE [LARGE SCALE GENOMIC DNA]</scope>
    <source>
        <strain>ATCC 51907 / DSM 11121 / KW20 / Rd</strain>
    </source>
</reference>